<accession>O66954</accession>
<comment type="function">
    <text evidence="1">Dual specificity isomerase that catalyzes the isomerization of both glucose-6-phosphate and mannose-6-phosphate to fructose-6-phosphate.</text>
</comment>
<comment type="catalytic activity">
    <reaction evidence="1">
        <text>alpha-D-glucose 6-phosphate = beta-D-fructose 6-phosphate</text>
        <dbReference type="Rhea" id="RHEA:11816"/>
        <dbReference type="ChEBI" id="CHEBI:57634"/>
        <dbReference type="ChEBI" id="CHEBI:58225"/>
        <dbReference type="EC" id="5.3.1.9"/>
    </reaction>
</comment>
<comment type="catalytic activity">
    <reaction evidence="1">
        <text>D-mannose 6-phosphate = D-fructose 6-phosphate</text>
        <dbReference type="Rhea" id="RHEA:12356"/>
        <dbReference type="ChEBI" id="CHEBI:58735"/>
        <dbReference type="ChEBI" id="CHEBI:61527"/>
        <dbReference type="EC" id="5.3.1.8"/>
    </reaction>
</comment>
<comment type="subunit">
    <text evidence="1">Homodimer.</text>
</comment>
<comment type="similarity">
    <text evidence="3">Belongs to the PGI/PMI family.</text>
</comment>
<organism>
    <name type="scientific">Aquifex aeolicus (strain VF5)</name>
    <dbReference type="NCBI Taxonomy" id="224324"/>
    <lineage>
        <taxon>Bacteria</taxon>
        <taxon>Pseudomonadati</taxon>
        <taxon>Aquificota</taxon>
        <taxon>Aquificia</taxon>
        <taxon>Aquificales</taxon>
        <taxon>Aquificaceae</taxon>
        <taxon>Aquifex</taxon>
    </lineage>
</organism>
<evidence type="ECO:0000250" key="1">
    <source>
        <dbReference type="UniProtKB" id="Q8ZWV0"/>
    </source>
</evidence>
<evidence type="ECO:0000255" key="2">
    <source>
        <dbReference type="PROSITE-ProRule" id="PRU00797"/>
    </source>
</evidence>
<evidence type="ECO:0000305" key="3"/>
<reference key="1">
    <citation type="journal article" date="1998" name="Nature">
        <title>The complete genome of the hyperthermophilic bacterium Aquifex aeolicus.</title>
        <authorList>
            <person name="Deckert G."/>
            <person name="Warren P.V."/>
            <person name="Gaasterland T."/>
            <person name="Young W.G."/>
            <person name="Lenox A.L."/>
            <person name="Graham D.E."/>
            <person name="Overbeek R."/>
            <person name="Snead M.A."/>
            <person name="Keller M."/>
            <person name="Aujay M."/>
            <person name="Huber R."/>
            <person name="Feldman R.A."/>
            <person name="Short J.M."/>
            <person name="Olsen G.J."/>
            <person name="Swanson R.V."/>
        </authorList>
    </citation>
    <scope>NUCLEOTIDE SEQUENCE [LARGE SCALE GENOMIC DNA]</scope>
    <source>
        <strain>VF5</strain>
    </source>
</reference>
<proteinExistence type="inferred from homology"/>
<protein>
    <recommendedName>
        <fullName evidence="1">Bifunctional phosphoglucose/phosphomannose isomerase</fullName>
        <shortName evidence="1">Bifunctional PGI/PMI</shortName>
        <ecNumber evidence="1">5.3.1.8</ecNumber>
        <ecNumber evidence="1">5.3.1.9</ecNumber>
    </recommendedName>
    <alternativeName>
        <fullName evidence="1">Glucose-6-phosphate isomerase</fullName>
        <shortName evidence="1">GPI</shortName>
    </alternativeName>
    <alternativeName>
        <fullName evidence="1">Mannose-6-phosphate isomerase</fullName>
    </alternativeName>
</protein>
<keyword id="KW-0119">Carbohydrate metabolism</keyword>
<keyword id="KW-0413">Isomerase</keyword>
<keyword id="KW-1185">Reference proteome</keyword>
<gene>
    <name type="ordered locus">aq_750</name>
</gene>
<dbReference type="EC" id="5.3.1.8" evidence="1"/>
<dbReference type="EC" id="5.3.1.9" evidence="1"/>
<dbReference type="EMBL" id="AE000657">
    <property type="protein sequence ID" value="AAC06906.1"/>
    <property type="molecule type" value="Genomic_DNA"/>
</dbReference>
<dbReference type="PIR" id="G70365">
    <property type="entry name" value="G70365"/>
</dbReference>
<dbReference type="RefSeq" id="NP_213515.1">
    <property type="nucleotide sequence ID" value="NC_000918.1"/>
</dbReference>
<dbReference type="RefSeq" id="WP_010880453.1">
    <property type="nucleotide sequence ID" value="NC_000918.1"/>
</dbReference>
<dbReference type="SMR" id="O66954"/>
<dbReference type="STRING" id="224324.aq_750"/>
<dbReference type="EnsemblBacteria" id="AAC06906">
    <property type="protein sequence ID" value="AAC06906"/>
    <property type="gene ID" value="aq_750"/>
</dbReference>
<dbReference type="KEGG" id="aae:aq_750"/>
<dbReference type="PATRIC" id="fig|224324.8.peg.598"/>
<dbReference type="eggNOG" id="COG2222">
    <property type="taxonomic scope" value="Bacteria"/>
</dbReference>
<dbReference type="HOGENOM" id="CLU_059687_0_0_0"/>
<dbReference type="InParanoid" id="O66954"/>
<dbReference type="OrthoDB" id="9771734at2"/>
<dbReference type="Proteomes" id="UP000000798">
    <property type="component" value="Chromosome"/>
</dbReference>
<dbReference type="GO" id="GO:0097367">
    <property type="term" value="F:carbohydrate derivative binding"/>
    <property type="evidence" value="ECO:0007669"/>
    <property type="project" value="InterPro"/>
</dbReference>
<dbReference type="GO" id="GO:0004347">
    <property type="term" value="F:glucose-6-phosphate isomerase activity"/>
    <property type="evidence" value="ECO:0007669"/>
    <property type="project" value="UniProtKB-EC"/>
</dbReference>
<dbReference type="GO" id="GO:0004476">
    <property type="term" value="F:mannose-6-phosphate isomerase activity"/>
    <property type="evidence" value="ECO:0007669"/>
    <property type="project" value="UniProtKB-EC"/>
</dbReference>
<dbReference type="GO" id="GO:1901135">
    <property type="term" value="P:carbohydrate derivative metabolic process"/>
    <property type="evidence" value="ECO:0007669"/>
    <property type="project" value="InterPro"/>
</dbReference>
<dbReference type="GO" id="GO:0005975">
    <property type="term" value="P:carbohydrate metabolic process"/>
    <property type="evidence" value="ECO:0007669"/>
    <property type="project" value="InterPro"/>
</dbReference>
<dbReference type="CDD" id="cd05017">
    <property type="entry name" value="SIS_PGI_PMI_1"/>
    <property type="match status" value="1"/>
</dbReference>
<dbReference type="CDD" id="cd05637">
    <property type="entry name" value="SIS_PGI_PMI_2"/>
    <property type="match status" value="1"/>
</dbReference>
<dbReference type="Gene3D" id="3.40.50.10490">
    <property type="entry name" value="Glucose-6-phosphate isomerase like protein, domain 1"/>
    <property type="match status" value="2"/>
</dbReference>
<dbReference type="InterPro" id="IPR019490">
    <property type="entry name" value="Glu6P/Mann6P_isomerase_C"/>
</dbReference>
<dbReference type="InterPro" id="IPR001347">
    <property type="entry name" value="SIS_dom"/>
</dbReference>
<dbReference type="InterPro" id="IPR046348">
    <property type="entry name" value="SIS_dom_sf"/>
</dbReference>
<dbReference type="InterPro" id="IPR035484">
    <property type="entry name" value="SIS_PGI/PMI_1"/>
</dbReference>
<dbReference type="NCBIfam" id="TIGR02128">
    <property type="entry name" value="G6PI_arch"/>
    <property type="match status" value="1"/>
</dbReference>
<dbReference type="NCBIfam" id="NF006423">
    <property type="entry name" value="PRK08674.1-2"/>
    <property type="match status" value="1"/>
</dbReference>
<dbReference type="Pfam" id="PF10432">
    <property type="entry name" value="bact-PGI_C"/>
    <property type="match status" value="1"/>
</dbReference>
<dbReference type="Pfam" id="PF01380">
    <property type="entry name" value="SIS"/>
    <property type="match status" value="1"/>
</dbReference>
<dbReference type="SUPFAM" id="SSF53697">
    <property type="entry name" value="SIS domain"/>
    <property type="match status" value="1"/>
</dbReference>
<dbReference type="PROSITE" id="PS51464">
    <property type="entry name" value="SIS"/>
    <property type="match status" value="1"/>
</dbReference>
<sequence length="320" mass="36847">MEEVYKVVEGFYNQFEWEDIAKDLTPYKGIVFCGMGGSGIIGSFASKWLEHRSFNKPTFVVKDYTLPPFVDRDYLVFCISYSGNTEETLSNFEEAIGRGIKPLCITSNGKLMERAKEEGCEIYEVPKGFQPRYSLGFMLSKVLNLLGVDKDELEDAKENLKENLESLKQKGKEIANRIYGYIPVVYSTPLTAHIAERWKGQINENSKSPAYFTILPEMHHNEVMGWSNPELRNKFVYLLMFDEKDHHRVKLRVDITKKILEDFGVVPIMLKGEGNSYLARSLYLVHLADWVSVFLAELYGYDPVPVKTIERIKEELKKHA</sequence>
<name>PGMI_AQUAE</name>
<feature type="chain" id="PRO_0000227793" description="Bifunctional phosphoglucose/phosphomannose isomerase">
    <location>
        <begin position="1"/>
        <end position="320"/>
    </location>
</feature>
<feature type="domain" description="SIS" evidence="2">
    <location>
        <begin position="20"/>
        <end position="153"/>
    </location>
</feature>
<feature type="active site" description="Proton acceptor" evidence="1">
    <location>
        <position position="204"/>
    </location>
</feature>
<feature type="active site" description="Proton donor" evidence="1">
    <location>
        <position position="220"/>
    </location>
</feature>
<feature type="active site" description="Proton acceptor" evidence="1">
    <location>
        <position position="313"/>
    </location>
</feature>
<feature type="binding site" evidence="1">
    <location>
        <position position="37"/>
    </location>
    <ligand>
        <name>D-fructose 6-phosphate</name>
        <dbReference type="ChEBI" id="CHEBI:61527"/>
    </ligand>
</feature>
<feature type="binding site" evidence="1">
    <location>
        <position position="38"/>
    </location>
    <ligand>
        <name>D-fructose 6-phosphate</name>
        <dbReference type="ChEBI" id="CHEBI:61527"/>
    </ligand>
</feature>
<feature type="binding site" evidence="1">
    <location>
        <position position="80"/>
    </location>
    <ligand>
        <name>D-fructose 6-phosphate</name>
        <dbReference type="ChEBI" id="CHEBI:61527"/>
    </ligand>
</feature>
<feature type="binding site" evidence="1">
    <location>
        <position position="82"/>
    </location>
    <ligand>
        <name>D-fructose 6-phosphate</name>
        <dbReference type="ChEBI" id="CHEBI:61527"/>
    </ligand>
</feature>
<feature type="binding site" evidence="1">
    <location>
        <position position="85"/>
    </location>
    <ligand>
        <name>D-fructose 6-phosphate</name>
        <dbReference type="ChEBI" id="CHEBI:61527"/>
    </ligand>
</feature>
<feature type="binding site" evidence="1">
    <location>
        <position position="132"/>
    </location>
    <ligand>
        <name>D-fructose 6-phosphate</name>
        <dbReference type="ChEBI" id="CHEBI:61527"/>
    </ligand>
</feature>
<feature type="binding site" evidence="1">
    <location>
        <position position="220"/>
    </location>
    <ligand>
        <name>D-fructose 6-phosphate</name>
        <dbReference type="ChEBI" id="CHEBI:61527"/>
    </ligand>
</feature>
<feature type="binding site" evidence="1">
    <location>
        <position position="313"/>
    </location>
    <ligand>
        <name>D-fructose 6-phosphate</name>
        <dbReference type="ChEBI" id="CHEBI:61527"/>
    </ligand>
</feature>